<sequence>MRQKHYLEAAARGLHDSCPGQARYLLWAYTSSHDDKSTFEETCPYCFQLLVLDNSRVRLKPKARLTPKIQKLLNREARNYTLSFKEAKMVKKFKDSKSVLLITCKTCNRTVKHHGKSRSFVSTLKSNPATPTSKLSLKTPERRTANPNHDMSGSKGKSPASVFRTPTSGQSVSTCSSKNTSKTKKHFSQLKMLLSQNESQKIPKVDFRNFLSSLKGGLLK</sequence>
<reference key="1">
    <citation type="submission" date="2004-05" db="EMBL/GenBank/DDBJ databases">
        <title>Screening and cloning of the target genes transactivated by hepatitis B virus X protein by microarray assay.</title>
        <authorList>
            <person name="Cheng J."/>
            <person name="Liu Y."/>
            <person name="Hong Y."/>
            <person name="Wang J.-J."/>
            <person name="Yang Q."/>
        </authorList>
    </citation>
    <scope>NUCLEOTIDE SEQUENCE [MRNA] (ISOFORM 2)</scope>
    <scope>VARIANT ALA-132</scope>
</reference>
<reference key="2">
    <citation type="journal article" date="2004" name="Genome Res.">
        <title>The status, quality, and expansion of the NIH full-length cDNA project: the Mammalian Gene Collection (MGC).</title>
        <authorList>
            <consortium name="The MGC Project Team"/>
        </authorList>
    </citation>
    <scope>NUCLEOTIDE SEQUENCE [LARGE SCALE MRNA] (ISOFORMS 1 AND 2)</scope>
    <scope>VARIANT ALA-132</scope>
    <source>
        <tissue>Colon</tissue>
    </source>
</reference>
<reference key="3">
    <citation type="submission" date="2000-06" db="EMBL/GenBank/DDBJ databases">
        <title>Human acute promyelocytic leukemia cell line NB4's apoptosis/differentiation related genes.</title>
        <authorList>
            <person name="Yu W.-Q."/>
            <person name="Sun B.-Z."/>
            <person name="Chai Y.-B."/>
            <person name="Zhu F."/>
            <person name="Liu X.-S."/>
            <person name="Li Z."/>
            <person name="Lu F."/>
            <person name="Yan W."/>
            <person name="Yang H."/>
            <person name="Zhao Z.-L."/>
        </authorList>
    </citation>
    <scope>NUCLEOTIDE SEQUENCE [LARGE SCALE MRNA] OF 14-220 (ISOFORM 1)</scope>
    <source>
        <tissue>Promyelocytic leukemia</tissue>
    </source>
</reference>
<reference key="4">
    <citation type="journal article" date="2008" name="Proc. Natl. Acad. Sci. U.S.A.">
        <title>A quantitative atlas of mitotic phosphorylation.</title>
        <authorList>
            <person name="Dephoure N."/>
            <person name="Zhou C."/>
            <person name="Villen J."/>
            <person name="Beausoleil S.A."/>
            <person name="Bakalarski C.E."/>
            <person name="Elledge S.J."/>
            <person name="Gygi S.P."/>
        </authorList>
    </citation>
    <scope>PHOSPHORYLATION [LARGE SCALE ANALYSIS] AT SER-126; THR-130 AND THR-139</scope>
    <scope>IDENTIFICATION BY MASS SPECTROMETRY [LARGE SCALE ANALYSIS]</scope>
    <source>
        <tissue>Cervix carcinoma</tissue>
    </source>
</reference>
<protein>
    <recommendedName>
        <fullName>UPF0711 protein C18orf21</fullName>
    </recommendedName>
    <alternativeName>
        <fullName>HBV X-transactivated gene 13 protein</fullName>
    </alternativeName>
    <alternativeName>
        <fullName>HBV XAg-transactivated protein 13</fullName>
    </alternativeName>
</protein>
<comment type="alternative products">
    <event type="alternative splicing"/>
    <isoform>
        <id>Q32NC0-1</id>
        <name>1</name>
        <sequence type="displayed"/>
    </isoform>
    <isoform>
        <id>Q32NC0-2</id>
        <name>2</name>
        <sequence type="described" ref="VSP_055184"/>
    </isoform>
</comment>
<comment type="similarity">
    <text evidence="6">Belongs to the UPF0711 family.</text>
</comment>
<comment type="sequence caution" evidence="6">
    <conflict type="erroneous initiation">
        <sequence resource="EMBL-CDS" id="AAK07541"/>
    </conflict>
</comment>
<comment type="sequence caution" evidence="6">
    <conflict type="frameshift">
        <sequence resource="EMBL-CDS" id="AAK07547"/>
    </conflict>
</comment>
<organism>
    <name type="scientific">Homo sapiens</name>
    <name type="common">Human</name>
    <dbReference type="NCBI Taxonomy" id="9606"/>
    <lineage>
        <taxon>Eukaryota</taxon>
        <taxon>Metazoa</taxon>
        <taxon>Chordata</taxon>
        <taxon>Craniata</taxon>
        <taxon>Vertebrata</taxon>
        <taxon>Euteleostomi</taxon>
        <taxon>Mammalia</taxon>
        <taxon>Eutheria</taxon>
        <taxon>Euarchontoglires</taxon>
        <taxon>Primates</taxon>
        <taxon>Haplorrhini</taxon>
        <taxon>Catarrhini</taxon>
        <taxon>Hominidae</taxon>
        <taxon>Homo</taxon>
    </lineage>
</organism>
<gene>
    <name type="primary">C18orf21</name>
    <name type="synonym">XTP13</name>
    <name type="ORF">PNAS-124</name>
    <name type="ORF">PNAS-131</name>
</gene>
<dbReference type="EMBL" id="AY631401">
    <property type="protein sequence ID" value="AAT51696.1"/>
    <property type="molecule type" value="mRNA"/>
</dbReference>
<dbReference type="EMBL" id="BC025950">
    <property type="status" value="NOT_ANNOTATED_CDS"/>
    <property type="molecule type" value="mRNA"/>
</dbReference>
<dbReference type="EMBL" id="BC108730">
    <property type="protein sequence ID" value="AAI08731.1"/>
    <property type="molecule type" value="mRNA"/>
</dbReference>
<dbReference type="EMBL" id="BC119765">
    <property type="protein sequence ID" value="AAI19766.1"/>
    <property type="molecule type" value="mRNA"/>
</dbReference>
<dbReference type="EMBL" id="BC119766">
    <property type="protein sequence ID" value="AAI19767.1"/>
    <property type="molecule type" value="mRNA"/>
</dbReference>
<dbReference type="EMBL" id="AF277182">
    <property type="protein sequence ID" value="AAK07541.1"/>
    <property type="status" value="ALT_INIT"/>
    <property type="molecule type" value="mRNA"/>
</dbReference>
<dbReference type="EMBL" id="AF277189">
    <property type="protein sequence ID" value="AAK07547.1"/>
    <property type="status" value="ALT_SEQ"/>
    <property type="molecule type" value="mRNA"/>
</dbReference>
<dbReference type="CCDS" id="CCDS11916.2">
    <molecule id="Q32NC0-1"/>
</dbReference>
<dbReference type="CCDS" id="CCDS56064.1">
    <molecule id="Q32NC0-2"/>
</dbReference>
<dbReference type="RefSeq" id="NP_001188403.1">
    <molecule id="Q32NC0-2"/>
    <property type="nucleotide sequence ID" value="NM_001201474.2"/>
</dbReference>
<dbReference type="RefSeq" id="NP_001188404.1">
    <molecule id="Q32NC0-2"/>
    <property type="nucleotide sequence ID" value="NM_001201475.2"/>
</dbReference>
<dbReference type="RefSeq" id="NP_113634.3">
    <molecule id="Q32NC0-1"/>
    <property type="nucleotide sequence ID" value="NM_031446.4"/>
</dbReference>
<dbReference type="BioGRID" id="123699">
    <property type="interactions" value="180"/>
</dbReference>
<dbReference type="FunCoup" id="Q32NC0">
    <property type="interactions" value="1136"/>
</dbReference>
<dbReference type="IntAct" id="Q32NC0">
    <property type="interactions" value="152"/>
</dbReference>
<dbReference type="STRING" id="9606.ENSP00000465517"/>
<dbReference type="GlyGen" id="Q32NC0">
    <property type="glycosylation" value="1 site, 1 N-linked glycan (1 site)"/>
</dbReference>
<dbReference type="iPTMnet" id="Q32NC0"/>
<dbReference type="PhosphoSitePlus" id="Q32NC0"/>
<dbReference type="BioMuta" id="C18orf21"/>
<dbReference type="DMDM" id="121942208"/>
<dbReference type="jPOST" id="Q32NC0"/>
<dbReference type="MassIVE" id="Q32NC0"/>
<dbReference type="PaxDb" id="9606-ENSP00000465517"/>
<dbReference type="PeptideAtlas" id="Q32NC0"/>
<dbReference type="ProteomicsDB" id="61619">
    <molecule id="Q32NC0-1"/>
</dbReference>
<dbReference type="Pumba" id="Q32NC0"/>
<dbReference type="Antibodypedia" id="54637">
    <property type="antibodies" value="24 antibodies from 10 providers"/>
</dbReference>
<dbReference type="DNASU" id="83608"/>
<dbReference type="Ensembl" id="ENST00000333234.5">
    <molecule id="Q32NC0-2"/>
    <property type="protein sequence ID" value="ENSP00000329492.5"/>
    <property type="gene ID" value="ENSG00000141428.17"/>
</dbReference>
<dbReference type="Ensembl" id="ENST00000592875.6">
    <molecule id="Q32NC0-1"/>
    <property type="protein sequence ID" value="ENSP00000465517.1"/>
    <property type="gene ID" value="ENSG00000141428.17"/>
</dbReference>
<dbReference type="Ensembl" id="ENST00000610527.4">
    <molecule id="Q32NC0-2"/>
    <property type="protein sequence ID" value="ENSP00000480486.1"/>
    <property type="gene ID" value="ENSG00000141428.17"/>
</dbReference>
<dbReference type="GeneID" id="83608"/>
<dbReference type="KEGG" id="hsa:83608"/>
<dbReference type="MANE-Select" id="ENST00000592875.6">
    <property type="protein sequence ID" value="ENSP00000465517.1"/>
    <property type="RefSeq nucleotide sequence ID" value="NM_031446.5"/>
    <property type="RefSeq protein sequence ID" value="NP_113634.3"/>
</dbReference>
<dbReference type="UCSC" id="uc002kzc.4">
    <molecule id="Q32NC0-1"/>
    <property type="organism name" value="human"/>
</dbReference>
<dbReference type="AGR" id="HGNC:28802"/>
<dbReference type="CTD" id="83608"/>
<dbReference type="DisGeNET" id="83608"/>
<dbReference type="GeneCards" id="C18orf21"/>
<dbReference type="HGNC" id="HGNC:28802">
    <property type="gene designation" value="C18orf21"/>
</dbReference>
<dbReference type="HPA" id="ENSG00000141428">
    <property type="expression patterns" value="Low tissue specificity"/>
</dbReference>
<dbReference type="neXtProt" id="NX_Q32NC0"/>
<dbReference type="OpenTargets" id="ENSG00000141428"/>
<dbReference type="PharmGKB" id="PA134888949"/>
<dbReference type="VEuPathDB" id="HostDB:ENSG00000141428"/>
<dbReference type="eggNOG" id="ENOG502S2A1">
    <property type="taxonomic scope" value="Eukaryota"/>
</dbReference>
<dbReference type="GeneTree" id="ENSGT00390000013383"/>
<dbReference type="HOGENOM" id="CLU_110760_0_0_1"/>
<dbReference type="InParanoid" id="Q32NC0"/>
<dbReference type="OMA" id="HKGVNRD"/>
<dbReference type="OrthoDB" id="10049098at2759"/>
<dbReference type="PAN-GO" id="Q32NC0">
    <property type="GO annotations" value="0 GO annotations based on evolutionary models"/>
</dbReference>
<dbReference type="PhylomeDB" id="Q32NC0"/>
<dbReference type="PathwayCommons" id="Q32NC0"/>
<dbReference type="SignaLink" id="Q32NC0"/>
<dbReference type="BioGRID-ORCS" id="83608">
    <property type="hits" value="328 hits in 1103 CRISPR screens"/>
</dbReference>
<dbReference type="GenomeRNAi" id="83608"/>
<dbReference type="Pharos" id="Q32NC0">
    <property type="development level" value="Tdark"/>
</dbReference>
<dbReference type="PRO" id="PR:Q32NC0"/>
<dbReference type="Proteomes" id="UP000005640">
    <property type="component" value="Chromosome 18"/>
</dbReference>
<dbReference type="RNAct" id="Q32NC0">
    <property type="molecule type" value="protein"/>
</dbReference>
<dbReference type="Bgee" id="ENSG00000141428">
    <property type="expression patterns" value="Expressed in primordial germ cell in gonad and 188 other cell types or tissues"/>
</dbReference>
<dbReference type="ExpressionAtlas" id="Q32NC0">
    <property type="expression patterns" value="baseline and differential"/>
</dbReference>
<dbReference type="InterPro" id="IPR029779">
    <property type="entry name" value="DUF4674"/>
</dbReference>
<dbReference type="PANTHER" id="PTHR31402">
    <property type="entry name" value="UPF0711 PROTEIN C18ORF21"/>
    <property type="match status" value="1"/>
</dbReference>
<dbReference type="PANTHER" id="PTHR31402:SF2">
    <property type="entry name" value="UPF0711 PROTEIN C18ORF21"/>
    <property type="match status" value="1"/>
</dbReference>
<dbReference type="Pfam" id="PF15719">
    <property type="entry name" value="DUF4674"/>
    <property type="match status" value="1"/>
</dbReference>
<name>CR021_HUMAN</name>
<accession>Q32NC0</accession>
<accession>Q6GW03</accession>
<accession>Q9BXV6</accession>
<accession>Q9BXW2</accession>
<keyword id="KW-0025">Alternative splicing</keyword>
<keyword id="KW-0597">Phosphoprotein</keyword>
<keyword id="KW-1267">Proteomics identification</keyword>
<keyword id="KW-1185">Reference proteome</keyword>
<feature type="chain" id="PRO_0000279448" description="UPF0711 protein C18orf21">
    <location>
        <begin position="1"/>
        <end position="220"/>
    </location>
</feature>
<feature type="region of interest" description="Disordered" evidence="1">
    <location>
        <begin position="117"/>
        <end position="181"/>
    </location>
</feature>
<feature type="compositionally biased region" description="Polar residues" evidence="1">
    <location>
        <begin position="119"/>
        <end position="136"/>
    </location>
</feature>
<feature type="compositionally biased region" description="Low complexity" evidence="1">
    <location>
        <begin position="171"/>
        <end position="180"/>
    </location>
</feature>
<feature type="modified residue" description="Phosphoserine" evidence="7">
    <location>
        <position position="126"/>
    </location>
</feature>
<feature type="modified residue" description="Phosphothreonine" evidence="7">
    <location>
        <position position="130"/>
    </location>
</feature>
<feature type="modified residue" description="Phosphothreonine" evidence="7">
    <location>
        <position position="139"/>
    </location>
</feature>
<feature type="splice variant" id="VSP_055184" description="In isoform 2." evidence="4 5">
    <location>
        <begin position="1"/>
        <end position="88"/>
    </location>
</feature>
<feature type="sequence variant" id="VAR_030903" description="In dbSNP:rs2276314." evidence="2 3">
    <original>T</original>
    <variation>A</variation>
    <location>
        <position position="132"/>
    </location>
</feature>
<feature type="sequence conflict" description="In Ref. 2; AAK07541." evidence="6" ref="2">
    <original>S</original>
    <variation>F</variation>
    <location>
        <position position="212"/>
    </location>
</feature>
<evidence type="ECO:0000256" key="1">
    <source>
        <dbReference type="SAM" id="MobiDB-lite"/>
    </source>
</evidence>
<evidence type="ECO:0000269" key="2">
    <source>
    </source>
</evidence>
<evidence type="ECO:0000269" key="3">
    <source ref="1"/>
</evidence>
<evidence type="ECO:0000303" key="4">
    <source>
    </source>
</evidence>
<evidence type="ECO:0000303" key="5">
    <source ref="1"/>
</evidence>
<evidence type="ECO:0000305" key="6"/>
<evidence type="ECO:0007744" key="7">
    <source>
    </source>
</evidence>
<proteinExistence type="evidence at protein level"/>